<name>HMC1_METTE</name>
<feature type="chain" id="PRO_0000084003" description="Chromosomal protein MC1">
    <location>
        <begin position="1"/>
        <end position="93"/>
    </location>
</feature>
<feature type="region of interest" description="Disordered" evidence="1">
    <location>
        <begin position="1"/>
        <end position="44"/>
    </location>
</feature>
<feature type="strand" evidence="2">
    <location>
        <begin position="4"/>
        <end position="8"/>
    </location>
</feature>
<feature type="turn" evidence="2">
    <location>
        <begin position="10"/>
        <end position="13"/>
    </location>
</feature>
<feature type="strand" evidence="2">
    <location>
        <begin position="17"/>
        <end position="23"/>
    </location>
</feature>
<feature type="helix" evidence="2">
    <location>
        <begin position="26"/>
        <end position="34"/>
    </location>
</feature>
<feature type="strand" evidence="2">
    <location>
        <begin position="39"/>
        <end position="41"/>
    </location>
</feature>
<feature type="strand" evidence="2">
    <location>
        <begin position="44"/>
        <end position="49"/>
    </location>
</feature>
<feature type="turn" evidence="2">
    <location>
        <begin position="50"/>
        <end position="53"/>
    </location>
</feature>
<feature type="strand" evidence="2">
    <location>
        <begin position="54"/>
        <end position="60"/>
    </location>
</feature>
<feature type="strand" evidence="2">
    <location>
        <begin position="62"/>
        <end position="65"/>
    </location>
</feature>
<feature type="strand" evidence="4">
    <location>
        <begin position="68"/>
        <end position="70"/>
    </location>
</feature>
<feature type="strand" evidence="3">
    <location>
        <begin position="73"/>
        <end position="75"/>
    </location>
</feature>
<feature type="strand" evidence="2">
    <location>
        <begin position="79"/>
        <end position="81"/>
    </location>
</feature>
<feature type="strand" evidence="2">
    <location>
        <begin position="84"/>
        <end position="91"/>
    </location>
</feature>
<proteinExistence type="evidence at protein level"/>
<keyword id="KW-0002">3D-structure</keyword>
<keyword id="KW-0903">Direct protein sequencing</keyword>
<keyword id="KW-0238">DNA-binding</keyword>
<evidence type="ECO:0000256" key="1">
    <source>
        <dbReference type="SAM" id="MobiDB-lite"/>
    </source>
</evidence>
<evidence type="ECO:0007829" key="2">
    <source>
        <dbReference type="PDB" id="1T23"/>
    </source>
</evidence>
<evidence type="ECO:0007829" key="3">
    <source>
        <dbReference type="PDB" id="2KHL"/>
    </source>
</evidence>
<evidence type="ECO:0007829" key="4">
    <source>
        <dbReference type="PDB" id="2NBJ"/>
    </source>
</evidence>
<protein>
    <recommendedName>
        <fullName>Chromosomal protein MC1</fullName>
    </recommendedName>
</protein>
<sequence length="93" mass="10663">SNTRNFVLRDEDGNEHGVFTGKQPRQAALKAANRGSGTKANPDIIRLRERGTKKVHVFKAWKEIVDAPKNRPAWMPEKISKPFVKKERIEKLE</sequence>
<accession>P12770</accession>
<organism>
    <name type="scientific">Methanosarcina thermophila</name>
    <dbReference type="NCBI Taxonomy" id="2210"/>
    <lineage>
        <taxon>Archaea</taxon>
        <taxon>Methanobacteriati</taxon>
        <taxon>Methanobacteriota</taxon>
        <taxon>Stenosarchaea group</taxon>
        <taxon>Methanomicrobia</taxon>
        <taxon>Methanosarcinales</taxon>
        <taxon>Methanosarcinaceae</taxon>
        <taxon>Methanosarcina</taxon>
    </lineage>
</organism>
<reference key="1">
    <citation type="journal article" date="1989" name="Biochim. Biophys. Acta">
        <title>Primary structure of the chromosomal protein MC1 from the archaebacterium Methanosarcina sp. CHTI 55.</title>
        <authorList>
            <person name="Chartier F."/>
            <person name="Laine B."/>
            <person name="Belaiche D."/>
            <person name="Touzel J.-P."/>
            <person name="Sautiere P."/>
        </authorList>
    </citation>
    <scope>PROTEIN SEQUENCE</scope>
    <source>
        <strain>ATCC 43170 / DSM 2906 / OCM 90 / CHTI-55</strain>
    </source>
</reference>
<reference key="2">
    <citation type="journal article" date="2004" name="Biochemistry">
        <title>NMR solution structure of the archaebacterial chromosomal protein MC1 reveals a new protein fold.</title>
        <authorList>
            <person name="Paquet F."/>
            <person name="Culard F."/>
            <person name="Barbault F."/>
            <person name="Maurizot J.C."/>
            <person name="Lancelot G."/>
        </authorList>
    </citation>
    <scope>STRUCTURE BY NMR</scope>
    <source>
        <strain>ATCC 43170 / DSM 2906 / OCM 90 / CHTI-55</strain>
    </source>
</reference>
<dbReference type="PIR" id="S05243">
    <property type="entry name" value="S05243"/>
</dbReference>
<dbReference type="PDB" id="1T23">
    <property type="method" value="NMR"/>
    <property type="chains" value="A=1-93"/>
</dbReference>
<dbReference type="PDB" id="2KHL">
    <property type="method" value="NMR"/>
    <property type="chains" value="A=1-93"/>
</dbReference>
<dbReference type="PDB" id="2NBJ">
    <property type="method" value="NMR"/>
    <property type="chains" value="A=1-93"/>
</dbReference>
<dbReference type="PDBsum" id="1T23"/>
<dbReference type="PDBsum" id="2KHL"/>
<dbReference type="PDBsum" id="2NBJ"/>
<dbReference type="BMRB" id="P12770"/>
<dbReference type="SMR" id="P12770"/>
<dbReference type="EvolutionaryTrace" id="P12770"/>
<dbReference type="GO" id="GO:0003677">
    <property type="term" value="F:DNA binding"/>
    <property type="evidence" value="ECO:0007669"/>
    <property type="project" value="UniProtKB-KW"/>
</dbReference>
<dbReference type="GO" id="GO:0042262">
    <property type="term" value="P:DNA protection"/>
    <property type="evidence" value="ECO:0007669"/>
    <property type="project" value="InterPro"/>
</dbReference>
<dbReference type="Gene3D" id="3.10.470.10">
    <property type="entry name" value="Chromosomal protein MC1"/>
    <property type="match status" value="1"/>
</dbReference>
<dbReference type="InterPro" id="IPR008674">
    <property type="entry name" value="MC1"/>
</dbReference>
<dbReference type="InterPro" id="IPR036620">
    <property type="entry name" value="MC1_sf"/>
</dbReference>
<dbReference type="Pfam" id="PF05854">
    <property type="entry name" value="MC1"/>
    <property type="match status" value="1"/>
</dbReference>
<dbReference type="SUPFAM" id="SSF102875">
    <property type="entry name" value="Chromosomal protein MC1"/>
    <property type="match status" value="1"/>
</dbReference>
<comment type="function">
    <text>Protects DNA against thermal denaturation and modulates transcription.</text>
</comment>